<dbReference type="EMBL" id="M81961">
    <property type="protein sequence ID" value="AAA24781.1"/>
    <property type="molecule type" value="Genomic_DNA"/>
</dbReference>
<dbReference type="PIR" id="A42111">
    <property type="entry name" value="A42111"/>
</dbReference>
<dbReference type="RefSeq" id="WP_010737630.1">
    <property type="nucleotide sequence ID" value="NZ_MJDO01000027.1"/>
</dbReference>
<dbReference type="SMR" id="P26235"/>
<dbReference type="STRING" id="1354.A6P53_06565"/>
<dbReference type="TCDB" id="2.A.37.2.1">
    <property type="family name" value="the monovalent cation:proton antiporter-2 (cpa2) family"/>
</dbReference>
<dbReference type="PATRIC" id="fig|1354.25.peg.1787"/>
<dbReference type="GO" id="GO:0016020">
    <property type="term" value="C:membrane"/>
    <property type="evidence" value="ECO:0000314"/>
    <property type="project" value="UniProtKB"/>
</dbReference>
<dbReference type="GO" id="GO:0005886">
    <property type="term" value="C:plasma membrane"/>
    <property type="evidence" value="ECO:0007669"/>
    <property type="project" value="UniProtKB-SubCell"/>
</dbReference>
<dbReference type="GO" id="GO:0015297">
    <property type="term" value="F:antiporter activity"/>
    <property type="evidence" value="ECO:0000314"/>
    <property type="project" value="UniProtKB"/>
</dbReference>
<dbReference type="GO" id="GO:0015081">
    <property type="term" value="F:sodium ion transmembrane transporter activity"/>
    <property type="evidence" value="ECO:0000314"/>
    <property type="project" value="UniProtKB"/>
</dbReference>
<dbReference type="GO" id="GO:1902600">
    <property type="term" value="P:proton transmembrane transport"/>
    <property type="evidence" value="ECO:0007669"/>
    <property type="project" value="InterPro"/>
</dbReference>
<dbReference type="GO" id="GO:0035725">
    <property type="term" value="P:sodium ion transmembrane transport"/>
    <property type="evidence" value="ECO:0000314"/>
    <property type="project" value="UniProtKB"/>
</dbReference>
<dbReference type="FunFam" id="1.20.1530.20:FF:000049">
    <property type="entry name" value="Na(+)/H(+) antiporter"/>
    <property type="match status" value="1"/>
</dbReference>
<dbReference type="Gene3D" id="1.20.1530.20">
    <property type="match status" value="1"/>
</dbReference>
<dbReference type="InterPro" id="IPR006153">
    <property type="entry name" value="Cation/H_exchanger_TM"/>
</dbReference>
<dbReference type="InterPro" id="IPR004771">
    <property type="entry name" value="K/H_exchanger"/>
</dbReference>
<dbReference type="InterPro" id="IPR038770">
    <property type="entry name" value="Na+/solute_symporter_sf"/>
</dbReference>
<dbReference type="NCBIfam" id="TIGR00932">
    <property type="entry name" value="2a37"/>
    <property type="match status" value="1"/>
</dbReference>
<dbReference type="PANTHER" id="PTHR43562">
    <property type="entry name" value="NAPA-TYPE SODIUM/HYDROGEN ANTIPORTER"/>
    <property type="match status" value="1"/>
</dbReference>
<dbReference type="PANTHER" id="PTHR43562:SF3">
    <property type="entry name" value="SODIUM ION_PROTON EXCHANGER (EUROFUNG)"/>
    <property type="match status" value="1"/>
</dbReference>
<dbReference type="Pfam" id="PF00999">
    <property type="entry name" value="Na_H_Exchanger"/>
    <property type="match status" value="1"/>
</dbReference>
<accession>P26235</accession>
<reference key="1">
    <citation type="journal article" date="1992" name="J. Biol. Chem.">
        <title>Cloning and disruption of a putative NaH-antiporter gene of Enterococcus hirae.</title>
        <authorList>
            <person name="Waser M."/>
            <person name="Hess-Bienz D."/>
            <person name="Davies K."/>
            <person name="Solioz M."/>
        </authorList>
    </citation>
    <scope>NUCLEOTIDE SEQUENCE [GENOMIC DNA]</scope>
    <scope>FUNCTION</scope>
    <scope>SUBCELLULAR LOCATION</scope>
    <scope>GENE NAME</scope>
</reference>
<reference key="2">
    <citation type="journal article" date="1992" name="FEMS Microbiol. Lett.">
        <title>The putative Na+/H+ antiporter (NapA) of Enterococcus hirae is homologous to the putative K+/H+ antiporter (KefC) of Escherichia coli.</title>
        <authorList>
            <person name="Reizer J."/>
            <person name="Reizer A."/>
            <person name="Saier M.H. Jr."/>
        </authorList>
    </citation>
    <scope>SIMILARITY TO KEFC</scope>
</reference>
<reference key="3">
    <citation type="journal article" date="1993" name="J. Biol. Chem.">
        <title>Functional expression of the Enterococcus hirae NaH-antiporter in Escherichia coli.</title>
        <authorList>
            <person name="Strausak D."/>
            <person name="Waser M."/>
            <person name="Solioz M."/>
        </authorList>
    </citation>
    <scope>FUNCTION</scope>
    <scope>BIOPHYSICOCHEMICAL PROPERTIES</scope>
    <scope>SUBCELLULAR LOCATION</scope>
</reference>
<feature type="chain" id="PRO_0000196615" description="Na(+)/H(+) antiporter">
    <location>
        <begin position="1"/>
        <end position="383"/>
    </location>
</feature>
<feature type="transmembrane region" description="Helical" evidence="1">
    <location>
        <begin position="1"/>
        <end position="21"/>
    </location>
</feature>
<feature type="transmembrane region" description="Helical" evidence="1">
    <location>
        <begin position="24"/>
        <end position="44"/>
    </location>
</feature>
<feature type="transmembrane region" description="Helical" evidence="1">
    <location>
        <begin position="51"/>
        <end position="71"/>
    </location>
</feature>
<feature type="transmembrane region" description="Helical" evidence="1">
    <location>
        <begin position="83"/>
        <end position="103"/>
    </location>
</feature>
<feature type="transmembrane region" description="Helical" evidence="1">
    <location>
        <begin position="112"/>
        <end position="132"/>
    </location>
</feature>
<feature type="transmembrane region" description="Helical" evidence="1">
    <location>
        <begin position="145"/>
        <end position="165"/>
    </location>
</feature>
<feature type="transmembrane region" description="Helical" evidence="1">
    <location>
        <begin position="186"/>
        <end position="206"/>
    </location>
</feature>
<feature type="transmembrane region" description="Helical" evidence="1">
    <location>
        <begin position="216"/>
        <end position="236"/>
    </location>
</feature>
<feature type="transmembrane region" description="Helical" evidence="1">
    <location>
        <begin position="262"/>
        <end position="282"/>
    </location>
</feature>
<feature type="transmembrane region" description="Helical" evidence="1">
    <location>
        <begin position="291"/>
        <end position="311"/>
    </location>
</feature>
<feature type="transmembrane region" description="Helical" evidence="1">
    <location>
        <begin position="323"/>
        <end position="343"/>
    </location>
</feature>
<feature type="transmembrane region" description="Helical" evidence="1">
    <location>
        <begin position="353"/>
        <end position="373"/>
    </location>
</feature>
<protein>
    <recommendedName>
        <fullName>Na(+)/H(+) antiporter</fullName>
    </recommendedName>
</protein>
<sequence length="383" mass="41555">MEFIGILCLILVATTIGSHISRRFGIPAVIGQLLVGVLLGQAGLGWVHPNILVHDFSEIGVILLMFLAGLESDLSLLKKYFKPGMFVALLGILFPVFFGWLTGEAFQVANNEAIFFGIILAATSVSISVEVLKELNVVNTKEGSTILGASVVDDILVVLVLSFSLSFLTGKSTSNLPLPLLLLEQLFYFLFIFLLVKWIAPFLMSLAEKIYANSAIIIMSLVICLGMSYLADLIGLSSVIGAFFAGIAVSQTKVKHEVYNNVEALGYAVFIPVFFVSVGLEVDFSKFSEQILFILILTLVAILTKLIGGYIGAKFSSFSSNSALMVGAGMISRGEMALIILQIGQQSNLIENHYYSPLVIVVLLSTLISPLILKYFTKKVYAN</sequence>
<gene>
    <name type="primary">napA</name>
</gene>
<keyword id="KW-0050">Antiport</keyword>
<keyword id="KW-1003">Cell membrane</keyword>
<keyword id="KW-0406">Ion transport</keyword>
<keyword id="KW-0472">Membrane</keyword>
<keyword id="KW-0915">Sodium</keyword>
<keyword id="KW-0739">Sodium transport</keyword>
<keyword id="KW-0812">Transmembrane</keyword>
<keyword id="KW-1133">Transmembrane helix</keyword>
<keyword id="KW-0813">Transport</keyword>
<name>NAPA_ENTHR</name>
<proteinExistence type="evidence at protein level"/>
<comment type="function">
    <text evidence="2 3">Na(+)/H(+) antiporter that extrudes sodium in exchange for external protons. Can also transport lithium.</text>
</comment>
<comment type="biophysicochemical properties">
    <kinetics>
        <KM evidence="3">1 mM for sodium</KM>
        <KM evidence="3">0.1 mM for lithium</KM>
    </kinetics>
</comment>
<comment type="subcellular location">
    <subcellularLocation>
        <location evidence="2 3">Cell membrane</location>
        <topology evidence="2 3">Multi-pass membrane protein</topology>
    </subcellularLocation>
</comment>
<comment type="similarity">
    <text evidence="4">Belongs to the monovalent cation:proton antiporter 2 (CPA2) transporter (TC 2.A.37) family.</text>
</comment>
<organism>
    <name type="scientific">Enterococcus hirae</name>
    <dbReference type="NCBI Taxonomy" id="1354"/>
    <lineage>
        <taxon>Bacteria</taxon>
        <taxon>Bacillati</taxon>
        <taxon>Bacillota</taxon>
        <taxon>Bacilli</taxon>
        <taxon>Lactobacillales</taxon>
        <taxon>Enterococcaceae</taxon>
        <taxon>Enterococcus</taxon>
    </lineage>
</organism>
<evidence type="ECO:0000255" key="1"/>
<evidence type="ECO:0000269" key="2">
    <source>
    </source>
</evidence>
<evidence type="ECO:0000269" key="3">
    <source>
    </source>
</evidence>
<evidence type="ECO:0000305" key="4"/>